<comment type="function">
    <text evidence="1">Snake venom serine protease that may act in the hemostasis system of the prey.</text>
</comment>
<comment type="subunit">
    <text evidence="1">Monomer.</text>
</comment>
<comment type="subcellular location">
    <subcellularLocation>
        <location evidence="1">Secreted</location>
    </subcellularLocation>
</comment>
<comment type="tissue specificity">
    <text>Expressed by the venom gland.</text>
</comment>
<comment type="similarity">
    <text evidence="3">Belongs to the peptidase S1 family. Snake venom subfamily.</text>
</comment>
<keyword id="KW-1015">Disulfide bond</keyword>
<keyword id="KW-0325">Glycoprotein</keyword>
<keyword id="KW-1199">Hemostasis impairing toxin</keyword>
<keyword id="KW-0378">Hydrolase</keyword>
<keyword id="KW-0645">Protease</keyword>
<keyword id="KW-0964">Secreted</keyword>
<keyword id="KW-0720">Serine protease</keyword>
<keyword id="KW-0732">Signal</keyword>
<keyword id="KW-0800">Toxin</keyword>
<sequence length="282" mass="31010">MVLIGVLASLLILQLSYSKSLDDGAKESAYDDEIQQSSWGNSTVNTTLTETVVIQLIMGGSECYKSKHPFLVYLYNSAGFFCSGTLLNHEWVLTAAHCNRDDIQLKLGVHNVHVHYEDEQIRVPKEKLCCLSTKNCTQWSQDIMLIRLNSSVNNSKHIEPLSLPSRPPSMGSDCTVMGWGTITSPKVTYPKVPHCVDIKILHNPVCQAAYPTMSRKNILCAGVLEGGKDSCKGDSGGPLICDGQIQGIVSWGRFPCAQLLEPGVYTKVFDYIDWIKGIIAGN</sequence>
<organism>
    <name type="scientific">Bungarus multicinctus</name>
    <name type="common">Many-banded krait</name>
    <dbReference type="NCBI Taxonomy" id="8616"/>
    <lineage>
        <taxon>Eukaryota</taxon>
        <taxon>Metazoa</taxon>
        <taxon>Chordata</taxon>
        <taxon>Craniata</taxon>
        <taxon>Vertebrata</taxon>
        <taxon>Euteleostomi</taxon>
        <taxon>Lepidosauria</taxon>
        <taxon>Squamata</taxon>
        <taxon>Bifurcata</taxon>
        <taxon>Unidentata</taxon>
        <taxon>Episquamata</taxon>
        <taxon>Toxicofera</taxon>
        <taxon>Serpentes</taxon>
        <taxon>Colubroidea</taxon>
        <taxon>Elapidae</taxon>
        <taxon>Bungarinae</taxon>
        <taxon>Bungarus</taxon>
    </lineage>
</organism>
<feature type="signal peptide" evidence="2">
    <location>
        <begin position="1"/>
        <end position="18"/>
    </location>
</feature>
<feature type="propeptide" id="PRO_0000417002" evidence="1">
    <location>
        <begin position="19"/>
        <end position="56"/>
    </location>
</feature>
<feature type="chain" id="PRO_0000417003" description="Snake venom serine protease BmSP">
    <location>
        <begin position="57"/>
        <end position="282" status="greater than"/>
    </location>
</feature>
<feature type="domain" description="Peptidase S1" evidence="3">
    <location>
        <begin position="57"/>
        <end position="280"/>
    </location>
</feature>
<feature type="active site" description="Charge relay system" evidence="1">
    <location>
        <position position="97"/>
    </location>
</feature>
<feature type="active site" description="Charge relay system" evidence="1">
    <location>
        <position position="142"/>
    </location>
</feature>
<feature type="active site" description="Charge relay system" evidence="1">
    <location>
        <position position="235"/>
    </location>
</feature>
<feature type="glycosylation site" description="N-linked (GlcNAc...) asparagine" evidence="2">
    <location>
        <position position="41"/>
    </location>
</feature>
<feature type="glycosylation site" description="N-linked (GlcNAc...) asparagine" evidence="2">
    <location>
        <position position="45"/>
    </location>
</feature>
<feature type="glycosylation site" description="N-linked (GlcNAc...) asparagine" evidence="2">
    <location>
        <position position="135"/>
    </location>
</feature>
<feature type="glycosylation site" description="N-linked (GlcNAc...) asparagine" evidence="2">
    <location>
        <position position="149"/>
    </location>
</feature>
<feature type="glycosylation site" description="N-linked (GlcNAc...) asparagine" evidence="2">
    <location>
        <position position="153"/>
    </location>
</feature>
<feature type="disulfide bond" evidence="3">
    <location>
        <begin position="63"/>
        <end position="195"/>
    </location>
</feature>
<feature type="disulfide bond" evidence="3">
    <location>
        <begin position="82"/>
        <end position="98"/>
    </location>
</feature>
<feature type="disulfide bond" evidence="3">
    <location>
        <begin position="174"/>
        <end position="241"/>
    </location>
</feature>
<feature type="disulfide bond" evidence="3">
    <location>
        <begin position="206"/>
        <end position="220"/>
    </location>
</feature>
<feature type="disulfide bond" evidence="3">
    <location>
        <begin position="231"/>
        <end position="256"/>
    </location>
</feature>
<feature type="non-terminal residue">
    <location>
        <position position="282"/>
    </location>
</feature>
<protein>
    <recommendedName>
        <fullName>Snake venom serine protease BmSP</fullName>
        <shortName>SVSP</shortName>
        <ecNumber>3.4.21.-</ecNumber>
    </recommendedName>
</protein>
<evidence type="ECO:0000250" key="1"/>
<evidence type="ECO:0000255" key="2"/>
<evidence type="ECO:0000255" key="3">
    <source>
        <dbReference type="PROSITE-ProRule" id="PRU00274"/>
    </source>
</evidence>
<name>VSP1_BUNMU</name>
<dbReference type="EC" id="3.4.21.-"/>
<dbReference type="EMBL" id="EF080838">
    <property type="protein sequence ID" value="ABN72545.1"/>
    <property type="molecule type" value="mRNA"/>
</dbReference>
<dbReference type="SMR" id="A8QL57"/>
<dbReference type="MEROPS" id="S01.481"/>
<dbReference type="GO" id="GO:0005576">
    <property type="term" value="C:extracellular region"/>
    <property type="evidence" value="ECO:0007669"/>
    <property type="project" value="UniProtKB-SubCell"/>
</dbReference>
<dbReference type="GO" id="GO:0030141">
    <property type="term" value="C:secretory granule"/>
    <property type="evidence" value="ECO:0007669"/>
    <property type="project" value="TreeGrafter"/>
</dbReference>
<dbReference type="GO" id="GO:0004252">
    <property type="term" value="F:serine-type endopeptidase activity"/>
    <property type="evidence" value="ECO:0007669"/>
    <property type="project" value="InterPro"/>
</dbReference>
<dbReference type="GO" id="GO:0090729">
    <property type="term" value="F:toxin activity"/>
    <property type="evidence" value="ECO:0007669"/>
    <property type="project" value="UniProtKB-KW"/>
</dbReference>
<dbReference type="GO" id="GO:0006508">
    <property type="term" value="P:proteolysis"/>
    <property type="evidence" value="ECO:0007669"/>
    <property type="project" value="UniProtKB-KW"/>
</dbReference>
<dbReference type="CDD" id="cd00190">
    <property type="entry name" value="Tryp_SPc"/>
    <property type="match status" value="1"/>
</dbReference>
<dbReference type="FunFam" id="2.40.10.10:FF:000010">
    <property type="entry name" value="Kallikrein related peptidase 11"/>
    <property type="match status" value="1"/>
</dbReference>
<dbReference type="Gene3D" id="2.40.10.10">
    <property type="entry name" value="Trypsin-like serine proteases"/>
    <property type="match status" value="2"/>
</dbReference>
<dbReference type="InterPro" id="IPR009003">
    <property type="entry name" value="Peptidase_S1_PA"/>
</dbReference>
<dbReference type="InterPro" id="IPR043504">
    <property type="entry name" value="Peptidase_S1_PA_chymotrypsin"/>
</dbReference>
<dbReference type="InterPro" id="IPR001314">
    <property type="entry name" value="Peptidase_S1A"/>
</dbReference>
<dbReference type="InterPro" id="IPR001254">
    <property type="entry name" value="Trypsin_dom"/>
</dbReference>
<dbReference type="InterPro" id="IPR018114">
    <property type="entry name" value="TRYPSIN_HIS"/>
</dbReference>
<dbReference type="InterPro" id="IPR033116">
    <property type="entry name" value="TRYPSIN_SER"/>
</dbReference>
<dbReference type="PANTHER" id="PTHR24271:SF47">
    <property type="entry name" value="KALLIKREIN-1"/>
    <property type="match status" value="1"/>
</dbReference>
<dbReference type="PANTHER" id="PTHR24271">
    <property type="entry name" value="KALLIKREIN-RELATED"/>
    <property type="match status" value="1"/>
</dbReference>
<dbReference type="Pfam" id="PF00089">
    <property type="entry name" value="Trypsin"/>
    <property type="match status" value="1"/>
</dbReference>
<dbReference type="PRINTS" id="PR00722">
    <property type="entry name" value="CHYMOTRYPSIN"/>
</dbReference>
<dbReference type="SMART" id="SM00020">
    <property type="entry name" value="Tryp_SPc"/>
    <property type="match status" value="1"/>
</dbReference>
<dbReference type="SUPFAM" id="SSF50494">
    <property type="entry name" value="Trypsin-like serine proteases"/>
    <property type="match status" value="1"/>
</dbReference>
<dbReference type="PROSITE" id="PS50240">
    <property type="entry name" value="TRYPSIN_DOM"/>
    <property type="match status" value="1"/>
</dbReference>
<dbReference type="PROSITE" id="PS00134">
    <property type="entry name" value="TRYPSIN_HIS"/>
    <property type="match status" value="1"/>
</dbReference>
<dbReference type="PROSITE" id="PS00135">
    <property type="entry name" value="TRYPSIN_SER"/>
    <property type="match status" value="1"/>
</dbReference>
<reference key="1">
    <citation type="journal article" date="2007" name="Toxicon">
        <title>Molecular cloning of serine proteases from elapid snake venoms.</title>
        <authorList>
            <person name="Jin Y."/>
            <person name="Lee W.H."/>
            <person name="Zhang Y."/>
        </authorList>
    </citation>
    <scope>NUCLEOTIDE SEQUENCE [MRNA]</scope>
    <source>
        <tissue>Venom gland</tissue>
    </source>
</reference>
<proteinExistence type="evidence at transcript level"/>
<accession>A8QL57</accession>